<accession>D2TMR7</accession>
<comment type="function">
    <text evidence="1">Transfers a fatty acid residue from the sn-1 position of a phospholipid to the N-linked hydroxyfatty acid chain on the proximal unit of lipid A or its precursors.</text>
</comment>
<comment type="catalytic activity">
    <reaction evidence="1">
        <text>a lipid A + a 1,2-diacyl-sn-glycero-3-phosphocholine = a hepta-acyl lipid A + a 2-acyl-sn-glycero-3-phosphocholine</text>
        <dbReference type="Rhea" id="RHEA:74275"/>
        <dbReference type="ChEBI" id="CHEBI:57643"/>
        <dbReference type="ChEBI" id="CHEBI:57875"/>
        <dbReference type="ChEBI" id="CHEBI:193141"/>
        <dbReference type="ChEBI" id="CHEBI:193142"/>
        <dbReference type="EC" id="2.3.1.251"/>
    </reaction>
</comment>
<comment type="catalytic activity">
    <reaction evidence="1">
        <text>a lipid IVA + a 1,2-diacyl-sn-glycero-3-phosphocholine = a lipid IVB + a 2-acyl-sn-glycero-3-phosphocholine</text>
        <dbReference type="Rhea" id="RHEA:74279"/>
        <dbReference type="ChEBI" id="CHEBI:57643"/>
        <dbReference type="ChEBI" id="CHEBI:57875"/>
        <dbReference type="ChEBI" id="CHEBI:176425"/>
        <dbReference type="ChEBI" id="CHEBI:193143"/>
        <dbReference type="EC" id="2.3.1.251"/>
    </reaction>
</comment>
<comment type="catalytic activity">
    <reaction evidence="1">
        <text>a lipid IIA + a 1,2-diacyl-sn-glycero-3-phosphocholine = a lipid IIB + a 2-acyl-sn-glycero-3-phosphocholine</text>
        <dbReference type="Rhea" id="RHEA:74283"/>
        <dbReference type="ChEBI" id="CHEBI:57643"/>
        <dbReference type="ChEBI" id="CHEBI:57875"/>
        <dbReference type="ChEBI" id="CHEBI:193144"/>
        <dbReference type="ChEBI" id="CHEBI:193145"/>
        <dbReference type="EC" id="2.3.1.251"/>
    </reaction>
</comment>
<comment type="subunit">
    <text evidence="1">Homodimer.</text>
</comment>
<comment type="subcellular location">
    <subcellularLocation>
        <location evidence="1">Cell outer membrane</location>
    </subcellularLocation>
</comment>
<comment type="similarity">
    <text evidence="1">Belongs to the lipid A palmitoyltransferase family.</text>
</comment>
<feature type="signal peptide" evidence="1">
    <location>
        <begin position="1"/>
        <end position="29"/>
    </location>
</feature>
<feature type="chain" id="PRO_5000565805" description="Lipid A acyltransferase PagP">
    <location>
        <begin position="30"/>
        <end position="192"/>
    </location>
</feature>
<feature type="active site" evidence="1">
    <location>
        <position position="64"/>
    </location>
</feature>
<feature type="active site" evidence="1">
    <location>
        <position position="107"/>
    </location>
</feature>
<feature type="active site" evidence="1">
    <location>
        <position position="108"/>
    </location>
</feature>
<feature type="site" description="Role in lipopolysaccharide recognition" evidence="1">
    <location>
        <position position="73"/>
    </location>
</feature>
<feature type="site" description="Role in the phospholipid gating" evidence="1">
    <location>
        <position position="178"/>
    </location>
</feature>
<name>PAGP_CITRI</name>
<protein>
    <recommendedName>
        <fullName evidence="1">Lipid A acyltransferase PagP</fullName>
        <ecNumber evidence="1">2.3.1.251</ecNumber>
    </recommendedName>
    <alternativeName>
        <fullName evidence="1">Lipid A acylation protein</fullName>
    </alternativeName>
</protein>
<reference key="1">
    <citation type="journal article" date="2010" name="J. Bacteriol.">
        <title>The Citrobacter rodentium genome sequence reveals convergent evolution with human pathogenic Escherichia coli.</title>
        <authorList>
            <person name="Petty N.K."/>
            <person name="Bulgin R."/>
            <person name="Crepin V.F."/>
            <person name="Cerdeno-Tarraga A.M."/>
            <person name="Schroeder G.N."/>
            <person name="Quail M.A."/>
            <person name="Lennard N."/>
            <person name="Corton C."/>
            <person name="Barron A."/>
            <person name="Clark L."/>
            <person name="Toribio A.L."/>
            <person name="Parkhill J."/>
            <person name="Dougan G."/>
            <person name="Frankel G."/>
            <person name="Thomson N.R."/>
        </authorList>
    </citation>
    <scope>NUCLEOTIDE SEQUENCE [LARGE SCALE GENOMIC DNA]</scope>
    <source>
        <strain>ICC168</strain>
    </source>
</reference>
<organism>
    <name type="scientific">Citrobacter rodentium (strain ICC168)</name>
    <name type="common">Citrobacter freundii biotype 4280</name>
    <dbReference type="NCBI Taxonomy" id="637910"/>
    <lineage>
        <taxon>Bacteria</taxon>
        <taxon>Pseudomonadati</taxon>
        <taxon>Pseudomonadota</taxon>
        <taxon>Gammaproteobacteria</taxon>
        <taxon>Enterobacterales</taxon>
        <taxon>Enterobacteriaceae</taxon>
        <taxon>Citrobacter</taxon>
    </lineage>
</organism>
<dbReference type="EC" id="2.3.1.251" evidence="1"/>
<dbReference type="EMBL" id="FN543502">
    <property type="protein sequence ID" value="CBG87412.1"/>
    <property type="molecule type" value="Genomic_DNA"/>
</dbReference>
<dbReference type="RefSeq" id="WP_012904975.1">
    <property type="nucleotide sequence ID" value="NC_013716.1"/>
</dbReference>
<dbReference type="SMR" id="D2TMR7"/>
<dbReference type="STRING" id="637910.ROD_06371"/>
<dbReference type="KEGG" id="cro:ROD_06371"/>
<dbReference type="eggNOG" id="ENOG502Z7SY">
    <property type="taxonomic scope" value="Bacteria"/>
</dbReference>
<dbReference type="HOGENOM" id="CLU_104099_0_0_6"/>
<dbReference type="OrthoDB" id="9156803at2"/>
<dbReference type="Proteomes" id="UP000001889">
    <property type="component" value="Chromosome"/>
</dbReference>
<dbReference type="GO" id="GO:0009279">
    <property type="term" value="C:cell outer membrane"/>
    <property type="evidence" value="ECO:0007669"/>
    <property type="project" value="UniProtKB-SubCell"/>
</dbReference>
<dbReference type="GO" id="GO:0016746">
    <property type="term" value="F:acyltransferase activity"/>
    <property type="evidence" value="ECO:0007669"/>
    <property type="project" value="UniProtKB-UniRule"/>
</dbReference>
<dbReference type="GO" id="GO:0009245">
    <property type="term" value="P:lipid A biosynthetic process"/>
    <property type="evidence" value="ECO:0007669"/>
    <property type="project" value="UniProtKB-UniRule"/>
</dbReference>
<dbReference type="FunFam" id="2.40.160.20:FF:000002">
    <property type="entry name" value="Lipid A palmitoyltransferase PagP"/>
    <property type="match status" value="1"/>
</dbReference>
<dbReference type="Gene3D" id="2.40.160.20">
    <property type="match status" value="1"/>
</dbReference>
<dbReference type="HAMAP" id="MF_00837">
    <property type="entry name" value="PagP_transferase"/>
    <property type="match status" value="1"/>
</dbReference>
<dbReference type="InterPro" id="IPR009746">
    <property type="entry name" value="LipidA_acyl_PagP"/>
</dbReference>
<dbReference type="InterPro" id="IPR011250">
    <property type="entry name" value="OMP/PagP_b-brl"/>
</dbReference>
<dbReference type="NCBIfam" id="NF008271">
    <property type="entry name" value="PRK11045.1"/>
    <property type="match status" value="1"/>
</dbReference>
<dbReference type="Pfam" id="PF07017">
    <property type="entry name" value="PagP"/>
    <property type="match status" value="1"/>
</dbReference>
<dbReference type="SUPFAM" id="SSF56925">
    <property type="entry name" value="OMPA-like"/>
    <property type="match status" value="1"/>
</dbReference>
<sequence length="192" mass="22390">MVVNVVIVAKKYFLFITLLIIQVSLPAHAGTDEKGWFNTFTDNVAETWREPEHYDLYIPAITWHARFAYDKRKTDRYNERPWGGGFGQSRWDEKGNWHGLYVMAFKDSWNKWEPIGGYGWESTWRPLPDDNFHLGLGFTAGVTARDNWKYIPVPVLLPLASIGYGPATFQMTYIPGTYNNGNVYFAWMRFQF</sequence>
<gene>
    <name evidence="1" type="primary">pagP</name>
    <name type="ordered locus">ROD_06371</name>
</gene>
<evidence type="ECO:0000255" key="1">
    <source>
        <dbReference type="HAMAP-Rule" id="MF_00837"/>
    </source>
</evidence>
<proteinExistence type="inferred from homology"/>
<keyword id="KW-0012">Acyltransferase</keyword>
<keyword id="KW-0998">Cell outer membrane</keyword>
<keyword id="KW-0472">Membrane</keyword>
<keyword id="KW-1185">Reference proteome</keyword>
<keyword id="KW-0732">Signal</keyword>
<keyword id="KW-0808">Transferase</keyword>